<keyword id="KW-0547">Nucleotide-binding</keyword>
<keyword id="KW-1185">Reference proteome</keyword>
<organism>
    <name type="scientific">Burkholderia multivorans (strain ATCC 17616 / 249)</name>
    <dbReference type="NCBI Taxonomy" id="395019"/>
    <lineage>
        <taxon>Bacteria</taxon>
        <taxon>Pseudomonadati</taxon>
        <taxon>Pseudomonadota</taxon>
        <taxon>Betaproteobacteria</taxon>
        <taxon>Burkholderiales</taxon>
        <taxon>Burkholderiaceae</taxon>
        <taxon>Burkholderia</taxon>
        <taxon>Burkholderia cepacia complex</taxon>
    </lineage>
</organism>
<dbReference type="EMBL" id="CP000868">
    <property type="protein sequence ID" value="ABX14436.1"/>
    <property type="molecule type" value="Genomic_DNA"/>
</dbReference>
<dbReference type="EMBL" id="AP009385">
    <property type="protein sequence ID" value="BAG44410.1"/>
    <property type="molecule type" value="Genomic_DNA"/>
</dbReference>
<dbReference type="RefSeq" id="WP_006398488.1">
    <property type="nucleotide sequence ID" value="NC_010804.1"/>
</dbReference>
<dbReference type="SMR" id="A9AGJ4"/>
<dbReference type="STRING" id="395019.BMULJ_02519"/>
<dbReference type="KEGG" id="bmj:BMULJ_02519"/>
<dbReference type="KEGG" id="bmu:Bmul_0741"/>
<dbReference type="eggNOG" id="COG1666">
    <property type="taxonomic scope" value="Bacteria"/>
</dbReference>
<dbReference type="HOGENOM" id="CLU_099839_1_0_4"/>
<dbReference type="Proteomes" id="UP000008815">
    <property type="component" value="Chromosome 1"/>
</dbReference>
<dbReference type="GO" id="GO:0005829">
    <property type="term" value="C:cytosol"/>
    <property type="evidence" value="ECO:0007669"/>
    <property type="project" value="TreeGrafter"/>
</dbReference>
<dbReference type="GO" id="GO:0000166">
    <property type="term" value="F:nucleotide binding"/>
    <property type="evidence" value="ECO:0007669"/>
    <property type="project" value="TreeGrafter"/>
</dbReference>
<dbReference type="CDD" id="cd11740">
    <property type="entry name" value="YajQ_like"/>
    <property type="match status" value="1"/>
</dbReference>
<dbReference type="Gene3D" id="3.30.70.990">
    <property type="entry name" value="YajQ-like, domain 2"/>
    <property type="match status" value="1"/>
</dbReference>
<dbReference type="HAMAP" id="MF_00632">
    <property type="entry name" value="YajQ"/>
    <property type="match status" value="1"/>
</dbReference>
<dbReference type="InterPro" id="IPR007551">
    <property type="entry name" value="DUF520"/>
</dbReference>
<dbReference type="InterPro" id="IPR035570">
    <property type="entry name" value="UPF0234_N"/>
</dbReference>
<dbReference type="InterPro" id="IPR036183">
    <property type="entry name" value="YajQ-like_sf"/>
</dbReference>
<dbReference type="NCBIfam" id="NF003819">
    <property type="entry name" value="PRK05412.1"/>
    <property type="match status" value="1"/>
</dbReference>
<dbReference type="PANTHER" id="PTHR30476">
    <property type="entry name" value="UPF0234 PROTEIN YAJQ"/>
    <property type="match status" value="1"/>
</dbReference>
<dbReference type="PANTHER" id="PTHR30476:SF0">
    <property type="entry name" value="UPF0234 PROTEIN YAJQ"/>
    <property type="match status" value="1"/>
</dbReference>
<dbReference type="Pfam" id="PF04461">
    <property type="entry name" value="DUF520"/>
    <property type="match status" value="1"/>
</dbReference>
<dbReference type="SUPFAM" id="SSF89963">
    <property type="entry name" value="YajQ-like"/>
    <property type="match status" value="2"/>
</dbReference>
<comment type="function">
    <text evidence="1">Nucleotide-binding protein.</text>
</comment>
<comment type="similarity">
    <text evidence="1">Belongs to the YajQ family.</text>
</comment>
<name>Y2519_BURM1</name>
<gene>
    <name type="ordered locus">Bmul_0741</name>
    <name type="ordered locus">BMULJ_02519</name>
</gene>
<feature type="chain" id="PRO_1000130607" description="Nucleotide-binding protein Bmul_0741/BMULJ_02519">
    <location>
        <begin position="1"/>
        <end position="161"/>
    </location>
</feature>
<accession>A9AGJ4</accession>
<reference key="1">
    <citation type="submission" date="2007-10" db="EMBL/GenBank/DDBJ databases">
        <title>Complete sequence of chromosome 1 of Burkholderia multivorans ATCC 17616.</title>
        <authorList>
            <person name="Copeland A."/>
            <person name="Lucas S."/>
            <person name="Lapidus A."/>
            <person name="Barry K."/>
            <person name="Glavina del Rio T."/>
            <person name="Dalin E."/>
            <person name="Tice H."/>
            <person name="Pitluck S."/>
            <person name="Chain P."/>
            <person name="Malfatti S."/>
            <person name="Shin M."/>
            <person name="Vergez L."/>
            <person name="Schmutz J."/>
            <person name="Larimer F."/>
            <person name="Land M."/>
            <person name="Hauser L."/>
            <person name="Kyrpides N."/>
            <person name="Kim E."/>
            <person name="Tiedje J."/>
            <person name="Richardson P."/>
        </authorList>
    </citation>
    <scope>NUCLEOTIDE SEQUENCE [LARGE SCALE GENOMIC DNA]</scope>
    <source>
        <strain>ATCC 17616 / 249</strain>
    </source>
</reference>
<reference key="2">
    <citation type="submission" date="2007-04" db="EMBL/GenBank/DDBJ databases">
        <title>Complete genome sequence of Burkholderia multivorans ATCC 17616.</title>
        <authorList>
            <person name="Ohtsubo Y."/>
            <person name="Yamashita A."/>
            <person name="Kurokawa K."/>
            <person name="Takami H."/>
            <person name="Yuhara S."/>
            <person name="Nishiyama E."/>
            <person name="Endo R."/>
            <person name="Miyazaki R."/>
            <person name="Ono A."/>
            <person name="Yano K."/>
            <person name="Ito M."/>
            <person name="Sota M."/>
            <person name="Yuji N."/>
            <person name="Hattori M."/>
            <person name="Tsuda M."/>
        </authorList>
    </citation>
    <scope>NUCLEOTIDE SEQUENCE [LARGE SCALE GENOMIC DNA]</scope>
    <source>
        <strain>ATCC 17616 / 249</strain>
    </source>
</reference>
<sequence length="161" mass="18022">MPSFDVVSEANMIEVKNAIEQSNKEISTRFDFKGSDARVEQKDRELTLFADDDFKLGQVKDVLIGKMAKRNVDVRFLDYGKVEKIGGDKVKQVVTVKKGVTGDLAKKIVRLVKDSKIKVQASIQGDAVRVSGAKRDDLQSVIAMLRKDVTDTPLDFNNFRD</sequence>
<proteinExistence type="inferred from homology"/>
<protein>
    <recommendedName>
        <fullName evidence="1">Nucleotide-binding protein Bmul_0741/BMULJ_02519</fullName>
    </recommendedName>
</protein>
<evidence type="ECO:0000255" key="1">
    <source>
        <dbReference type="HAMAP-Rule" id="MF_00632"/>
    </source>
</evidence>